<reference key="1">
    <citation type="journal article" date="1996" name="Appl. Environ. Microbiol.">
        <title>Isolation of expressed sequence tags of Agaricus bisporus and their assignment to chromosomes.</title>
        <authorList>
            <person name="Sonnenberg A.S.M."/>
            <person name="de Groot P.W.J."/>
            <person name="Schaap P.J."/>
            <person name="Baars J.J.P."/>
            <person name="Visser J."/>
            <person name="van Griensven L.J.L.D."/>
        </authorList>
    </citation>
    <scope>NUCLEOTIDE SEQUENCE [MRNA]</scope>
    <source>
        <strain>Horst U1</strain>
    </source>
</reference>
<feature type="initiator methionine" description="Removed" evidence="1">
    <location>
        <position position="1"/>
    </location>
</feature>
<feature type="chain" id="PRO_0000158275" description="Histone H4">
    <location>
        <begin position="2"/>
        <end position="103"/>
    </location>
</feature>
<feature type="DNA-binding region">
    <location>
        <begin position="17"/>
        <end position="21"/>
    </location>
</feature>
<feature type="region of interest" description="Disordered" evidence="4">
    <location>
        <begin position="1"/>
        <end position="20"/>
    </location>
</feature>
<feature type="compositionally biased region" description="Gly residues" evidence="4">
    <location>
        <begin position="1"/>
        <end position="14"/>
    </location>
</feature>
<feature type="modified residue" description="N6-acetyl-N6-methyllysine; alternate" evidence="3">
    <location>
        <position position="6"/>
    </location>
</feature>
<feature type="modified residue" description="N6-methyllysine; alternate" evidence="2">
    <location>
        <position position="6"/>
    </location>
</feature>
<feature type="modified residue" description="N6-methyllysine; alternate" evidence="2">
    <location>
        <position position="9"/>
    </location>
</feature>
<feature type="modified residue" description="N6-acetyl-N6-methyllysine; alternate" evidence="3">
    <location>
        <position position="13"/>
    </location>
</feature>
<feature type="modified residue" description="N6-methyllysine; alternate" evidence="2">
    <location>
        <position position="13"/>
    </location>
</feature>
<feature type="modified residue" description="N6-glutaryllysine" evidence="2">
    <location>
        <position position="92"/>
    </location>
</feature>
<sequence>MSGRGKGGKGLGKGGAKRHRKILRDNIQGITKPAIRRLARRGGVKRISGLIYEETRGVLKIFLENVIRDSVTYTEHAKRKTVTALDVVYALKRSGRTLYGFGA</sequence>
<proteinExistence type="inferred from homology"/>
<organism>
    <name type="scientific">Agaricus bisporus</name>
    <name type="common">White button mushroom</name>
    <dbReference type="NCBI Taxonomy" id="5341"/>
    <lineage>
        <taxon>Eukaryota</taxon>
        <taxon>Fungi</taxon>
        <taxon>Dikarya</taxon>
        <taxon>Basidiomycota</taxon>
        <taxon>Agaricomycotina</taxon>
        <taxon>Agaricomycetes</taxon>
        <taxon>Agaricomycetidae</taxon>
        <taxon>Agaricales</taxon>
        <taxon>Agaricineae</taxon>
        <taxon>Agaricaceae</taxon>
        <taxon>Agaricus</taxon>
    </lineage>
</organism>
<name>H4_AGABI</name>
<keyword id="KW-0007">Acetylation</keyword>
<keyword id="KW-0158">Chromosome</keyword>
<keyword id="KW-0238">DNA-binding</keyword>
<keyword id="KW-0488">Methylation</keyword>
<keyword id="KW-0544">Nucleosome core</keyword>
<keyword id="KW-0539">Nucleus</keyword>
<accession>P62793</accession>
<accession>P35058</accession>
<gene>
    <name type="primary">hhfA</name>
</gene>
<dbReference type="EMBL" id="X94189">
    <property type="protein sequence ID" value="CAA63899.1"/>
    <property type="molecule type" value="mRNA"/>
</dbReference>
<dbReference type="SMR" id="P62793"/>
<dbReference type="OMA" id="QKEHING"/>
<dbReference type="GO" id="GO:0000786">
    <property type="term" value="C:nucleosome"/>
    <property type="evidence" value="ECO:0007669"/>
    <property type="project" value="UniProtKB-KW"/>
</dbReference>
<dbReference type="GO" id="GO:0005634">
    <property type="term" value="C:nucleus"/>
    <property type="evidence" value="ECO:0007669"/>
    <property type="project" value="UniProtKB-SubCell"/>
</dbReference>
<dbReference type="GO" id="GO:0003677">
    <property type="term" value="F:DNA binding"/>
    <property type="evidence" value="ECO:0007669"/>
    <property type="project" value="UniProtKB-KW"/>
</dbReference>
<dbReference type="GO" id="GO:0046982">
    <property type="term" value="F:protein heterodimerization activity"/>
    <property type="evidence" value="ECO:0007669"/>
    <property type="project" value="InterPro"/>
</dbReference>
<dbReference type="GO" id="GO:0030527">
    <property type="term" value="F:structural constituent of chromatin"/>
    <property type="evidence" value="ECO:0007669"/>
    <property type="project" value="InterPro"/>
</dbReference>
<dbReference type="CDD" id="cd22912">
    <property type="entry name" value="HFD_H4"/>
    <property type="match status" value="1"/>
</dbReference>
<dbReference type="FunFam" id="1.10.20.10:FF:000002">
    <property type="entry name" value="Histone H4"/>
    <property type="match status" value="1"/>
</dbReference>
<dbReference type="Gene3D" id="1.10.20.10">
    <property type="entry name" value="Histone, subunit A"/>
    <property type="match status" value="1"/>
</dbReference>
<dbReference type="InterPro" id="IPR035425">
    <property type="entry name" value="CENP-T/H4_C"/>
</dbReference>
<dbReference type="InterPro" id="IPR009072">
    <property type="entry name" value="Histone-fold"/>
</dbReference>
<dbReference type="InterPro" id="IPR001951">
    <property type="entry name" value="Histone_H4"/>
</dbReference>
<dbReference type="InterPro" id="IPR019809">
    <property type="entry name" value="Histone_H4_CS"/>
</dbReference>
<dbReference type="PANTHER" id="PTHR10484">
    <property type="entry name" value="HISTONE H4"/>
    <property type="match status" value="1"/>
</dbReference>
<dbReference type="Pfam" id="PF15511">
    <property type="entry name" value="CENP-T_C"/>
    <property type="match status" value="1"/>
</dbReference>
<dbReference type="PRINTS" id="PR00623">
    <property type="entry name" value="HISTONEH4"/>
</dbReference>
<dbReference type="SMART" id="SM00417">
    <property type="entry name" value="H4"/>
    <property type="match status" value="1"/>
</dbReference>
<dbReference type="SUPFAM" id="SSF47113">
    <property type="entry name" value="Histone-fold"/>
    <property type="match status" value="1"/>
</dbReference>
<dbReference type="PROSITE" id="PS00047">
    <property type="entry name" value="HISTONE_H4"/>
    <property type="match status" value="1"/>
</dbReference>
<protein>
    <recommendedName>
        <fullName>Histone H4</fullName>
    </recommendedName>
</protein>
<comment type="function">
    <text>Core component of nucleosome. Nucleosomes wrap and compact DNA into chromatin, limiting DNA accessibility to the cellular machineries which require DNA as a template. Histones thereby play a central role in transcription regulation, DNA repair, DNA replication and chromosomal stability. DNA accessibility is regulated via a complex set of post-translational modifications of histones, also called histone code, and nucleosome remodeling.</text>
</comment>
<comment type="subunit">
    <text>The nucleosome is a histone octamer containing two molecules each of H2A, H2B, H3 and H4 assembled in one H3-H4 heterotetramer and two H2A-H2B heterodimers. The octamer wraps approximately 147 bp of DNA.</text>
</comment>
<comment type="subcellular location">
    <subcellularLocation>
        <location evidence="1">Nucleus</location>
    </subcellularLocation>
    <subcellularLocation>
        <location evidence="1">Chromosome</location>
    </subcellularLocation>
</comment>
<comment type="PTM">
    <text evidence="2">Glutarylation at Lys-92 (H4K91glu) destabilizes nucleosomes by promoting dissociation of the H2A-H2B dimers from nucleosomes.</text>
</comment>
<comment type="similarity">
    <text evidence="5">Belongs to the histone H4 family.</text>
</comment>
<evidence type="ECO:0000250" key="1"/>
<evidence type="ECO:0000250" key="2">
    <source>
        <dbReference type="UniProtKB" id="P02309"/>
    </source>
</evidence>
<evidence type="ECO:0000250" key="3">
    <source>
        <dbReference type="UniProtKB" id="P62805"/>
    </source>
</evidence>
<evidence type="ECO:0000256" key="4">
    <source>
        <dbReference type="SAM" id="MobiDB-lite"/>
    </source>
</evidence>
<evidence type="ECO:0000305" key="5"/>